<evidence type="ECO:0000250" key="1">
    <source>
        <dbReference type="UniProtKB" id="P00395"/>
    </source>
</evidence>
<evidence type="ECO:0000250" key="2">
    <source>
        <dbReference type="UniProtKB" id="P00396"/>
    </source>
</evidence>
<evidence type="ECO:0000250" key="3">
    <source>
        <dbReference type="UniProtKB" id="P00401"/>
    </source>
</evidence>
<evidence type="ECO:0000305" key="4"/>
<reference key="1">
    <citation type="journal article" date="1996" name="Genetics">
        <title>The complete mitochondrial DNA sequence of the bichir (Polypterus ornatipinnis), a basal ray-finned fish: ancient establishment of the consensus vertebrate gene order.</title>
        <authorList>
            <person name="Noack K."/>
            <person name="Zardoya R."/>
            <person name="Meyer A."/>
        </authorList>
    </citation>
    <scope>NUCLEOTIDE SEQUENCE [GENOMIC DNA]</scope>
</reference>
<geneLocation type="mitochondrion"/>
<feature type="chain" id="PRO_0000183398" description="Cytochrome c oxidase subunit 1">
    <location>
        <begin position="1"/>
        <end position="518"/>
    </location>
</feature>
<feature type="topological domain" description="Mitochondrial matrix" evidence="2">
    <location>
        <begin position="1"/>
        <end position="11"/>
    </location>
</feature>
<feature type="transmembrane region" description="Helical; Name=I" evidence="2">
    <location>
        <begin position="12"/>
        <end position="40"/>
    </location>
</feature>
<feature type="topological domain" description="Mitochondrial intermembrane" evidence="2">
    <location>
        <begin position="41"/>
        <end position="50"/>
    </location>
</feature>
<feature type="transmembrane region" description="Helical; Name=II" evidence="2">
    <location>
        <begin position="51"/>
        <end position="86"/>
    </location>
</feature>
<feature type="topological domain" description="Mitochondrial matrix" evidence="2">
    <location>
        <begin position="87"/>
        <end position="94"/>
    </location>
</feature>
<feature type="transmembrane region" description="Helical; Name=III" evidence="2">
    <location>
        <begin position="95"/>
        <end position="117"/>
    </location>
</feature>
<feature type="topological domain" description="Mitochondrial intermembrane" evidence="2">
    <location>
        <begin position="118"/>
        <end position="140"/>
    </location>
</feature>
<feature type="transmembrane region" description="Helical; Name=IV" evidence="2">
    <location>
        <begin position="141"/>
        <end position="170"/>
    </location>
</feature>
<feature type="topological domain" description="Mitochondrial matrix" evidence="2">
    <location>
        <begin position="171"/>
        <end position="182"/>
    </location>
</feature>
<feature type="transmembrane region" description="Helical; Name=V" evidence="2">
    <location>
        <begin position="183"/>
        <end position="212"/>
    </location>
</feature>
<feature type="topological domain" description="Mitochondrial intermembrane" evidence="2">
    <location>
        <begin position="213"/>
        <end position="227"/>
    </location>
</feature>
<feature type="transmembrane region" description="Helical; Name=VI" evidence="2">
    <location>
        <begin position="228"/>
        <end position="261"/>
    </location>
</feature>
<feature type="topological domain" description="Mitochondrial matrix" evidence="2">
    <location>
        <begin position="262"/>
        <end position="269"/>
    </location>
</feature>
<feature type="transmembrane region" description="Helical; Name=VII" evidence="2">
    <location>
        <begin position="270"/>
        <end position="286"/>
    </location>
</feature>
<feature type="topological domain" description="Mitochondrial intermembrane" evidence="2">
    <location>
        <begin position="287"/>
        <end position="298"/>
    </location>
</feature>
<feature type="transmembrane region" description="Helical; Name=VIII" evidence="2">
    <location>
        <begin position="299"/>
        <end position="327"/>
    </location>
</feature>
<feature type="topological domain" description="Mitochondrial matrix" evidence="2">
    <location>
        <begin position="328"/>
        <end position="335"/>
    </location>
</feature>
<feature type="transmembrane region" description="Helical; Name=IX" evidence="2">
    <location>
        <begin position="336"/>
        <end position="357"/>
    </location>
</feature>
<feature type="topological domain" description="Mitochondrial intermembrane" evidence="2">
    <location>
        <begin position="358"/>
        <end position="370"/>
    </location>
</feature>
<feature type="transmembrane region" description="Helical; Name=X" evidence="2">
    <location>
        <begin position="371"/>
        <end position="400"/>
    </location>
</feature>
<feature type="topological domain" description="Mitochondrial matrix" evidence="2">
    <location>
        <begin position="401"/>
        <end position="406"/>
    </location>
</feature>
<feature type="transmembrane region" description="Helical; Name=XI" evidence="2">
    <location>
        <begin position="407"/>
        <end position="433"/>
    </location>
</feature>
<feature type="topological domain" description="Mitochondrial intermembrane" evidence="2">
    <location>
        <begin position="434"/>
        <end position="446"/>
    </location>
</feature>
<feature type="transmembrane region" description="Helical; Name=XII" evidence="2">
    <location>
        <begin position="447"/>
        <end position="478"/>
    </location>
</feature>
<feature type="topological domain" description="Mitochondrial matrix" evidence="2">
    <location>
        <begin position="479"/>
        <end position="518"/>
    </location>
</feature>
<feature type="binding site" evidence="2">
    <location>
        <position position="40"/>
    </location>
    <ligand>
        <name>Na(+)</name>
        <dbReference type="ChEBI" id="CHEBI:29101"/>
    </ligand>
</feature>
<feature type="binding site" evidence="2">
    <location>
        <position position="45"/>
    </location>
    <ligand>
        <name>Na(+)</name>
        <dbReference type="ChEBI" id="CHEBI:29101"/>
    </ligand>
</feature>
<feature type="binding site" description="axial binding residue" evidence="2">
    <location>
        <position position="61"/>
    </location>
    <ligand>
        <name>Fe(II)-heme a</name>
        <dbReference type="ChEBI" id="CHEBI:61715"/>
        <note>low-spin</note>
    </ligand>
    <ligandPart>
        <name>Fe</name>
        <dbReference type="ChEBI" id="CHEBI:18248"/>
    </ligandPart>
</feature>
<feature type="binding site" evidence="2">
    <location>
        <position position="240"/>
    </location>
    <ligand>
        <name>Cu cation</name>
        <dbReference type="ChEBI" id="CHEBI:23378"/>
        <label>B</label>
    </ligand>
</feature>
<feature type="binding site" evidence="2">
    <location>
        <position position="244"/>
    </location>
    <ligand>
        <name>O2</name>
        <dbReference type="ChEBI" id="CHEBI:15379"/>
    </ligand>
</feature>
<feature type="binding site" evidence="2">
    <location>
        <position position="290"/>
    </location>
    <ligand>
        <name>Cu cation</name>
        <dbReference type="ChEBI" id="CHEBI:23378"/>
        <label>B</label>
    </ligand>
</feature>
<feature type="binding site" evidence="2">
    <location>
        <position position="291"/>
    </location>
    <ligand>
        <name>Cu cation</name>
        <dbReference type="ChEBI" id="CHEBI:23378"/>
        <label>B</label>
    </ligand>
</feature>
<feature type="binding site" evidence="2">
    <location>
        <position position="368"/>
    </location>
    <ligand>
        <name>Mg(2+)</name>
        <dbReference type="ChEBI" id="CHEBI:18420"/>
        <note>ligand shared with MT-CO2</note>
    </ligand>
</feature>
<feature type="binding site" evidence="2">
    <location>
        <position position="369"/>
    </location>
    <ligand>
        <name>Mg(2+)</name>
        <dbReference type="ChEBI" id="CHEBI:18420"/>
        <note>ligand shared with MT-CO2</note>
    </ligand>
</feature>
<feature type="binding site" description="axial binding residue" evidence="2">
    <location>
        <position position="376"/>
    </location>
    <ligand>
        <name>heme a3</name>
        <dbReference type="ChEBI" id="CHEBI:83282"/>
        <note>high-spin</note>
    </ligand>
    <ligandPart>
        <name>Fe</name>
        <dbReference type="ChEBI" id="CHEBI:18248"/>
    </ligandPart>
</feature>
<feature type="binding site" description="axial binding residue" evidence="2">
    <location>
        <position position="378"/>
    </location>
    <ligand>
        <name>Fe(II)-heme a</name>
        <dbReference type="ChEBI" id="CHEBI:61715"/>
        <note>low-spin</note>
    </ligand>
    <ligandPart>
        <name>Fe</name>
        <dbReference type="ChEBI" id="CHEBI:18248"/>
    </ligandPart>
</feature>
<feature type="binding site" evidence="2">
    <location>
        <position position="441"/>
    </location>
    <ligand>
        <name>Na(+)</name>
        <dbReference type="ChEBI" id="CHEBI:29101"/>
    </ligand>
</feature>
<feature type="cross-link" description="1'-histidyl-3'-tyrosine (His-Tyr)" evidence="2">
    <location>
        <begin position="240"/>
        <end position="244"/>
    </location>
</feature>
<keyword id="KW-0106">Calcium</keyword>
<keyword id="KW-0186">Copper</keyword>
<keyword id="KW-0249">Electron transport</keyword>
<keyword id="KW-0349">Heme</keyword>
<keyword id="KW-0408">Iron</keyword>
<keyword id="KW-0460">Magnesium</keyword>
<keyword id="KW-0472">Membrane</keyword>
<keyword id="KW-0479">Metal-binding</keyword>
<keyword id="KW-0496">Mitochondrion</keyword>
<keyword id="KW-0999">Mitochondrion inner membrane</keyword>
<keyword id="KW-0679">Respiratory chain</keyword>
<keyword id="KW-0915">Sodium</keyword>
<keyword id="KW-1278">Translocase</keyword>
<keyword id="KW-0812">Transmembrane</keyword>
<keyword id="KW-1133">Transmembrane helix</keyword>
<keyword id="KW-0813">Transport</keyword>
<protein>
    <recommendedName>
        <fullName>Cytochrome c oxidase subunit 1</fullName>
        <ecNumber>7.1.1.9</ecNumber>
    </recommendedName>
    <alternativeName>
        <fullName>Cytochrome c oxidase polypeptide I</fullName>
    </alternativeName>
</protein>
<gene>
    <name type="primary">mt-co1</name>
    <name type="synonym">coi</name>
    <name type="synonym">coxi</name>
    <name type="synonym">mtco1</name>
</gene>
<organism>
    <name type="scientific">Polypterus ornatipinnis</name>
    <name type="common">Ornate bichir</name>
    <dbReference type="NCBI Taxonomy" id="49895"/>
    <lineage>
        <taxon>Eukaryota</taxon>
        <taxon>Metazoa</taxon>
        <taxon>Chordata</taxon>
        <taxon>Craniata</taxon>
        <taxon>Vertebrata</taxon>
        <taxon>Euteleostomi</taxon>
        <taxon>Actinopterygii</taxon>
        <taxon>Polypteriformes</taxon>
        <taxon>Polypteridae</taxon>
        <taxon>Polypterus</taxon>
    </lineage>
</organism>
<sequence length="518" mass="56990">MTITRWLFSTNHKDIGTLDLIFGAWAGMVGTALSLLIRAELGQPGALMGDDQIYNVVGTAHAFVMIFFMVMPIMIGGFGNWLVPLMIGAPDMAFPRMNNMSFWLLPPSLLLLLTSSAVEAGVGTGWTVYPPLGGNLAHAGASVDLAIFSLHLVGVSSILGAINFITTIINMKPPSTSQYQTPLFVWSVLVTAVLLLLSLPVLAAGITMLLTDRNLNTTFFDPAGGGDPILYQHLFWFFGHPEVYILILPGFGMVSHIVAYYSGKNEPFGYMGMVWAMMAIGLLGFIVWAHHMFTVGMDVDTRAYFTSATMIIAIPTGVKVFSWLATLHGGAIKWETPMLWALGFIFLLTVGGLTGIILANSSLDIMLHDTYYVVAHFHYVLSMGAVLAIMGGLVHWFPLFPGYTLHPTWTKIHFGVMFIGVNLTFSPQHFLGLAGMPRRYSDYPDAYTLWNSLSSIGSMISLTAVIMFLFILWEAFAAKREVQTVELTHTNVEWLHGCPPPYHTYEEPAFVQSPQARE</sequence>
<dbReference type="EC" id="7.1.1.9"/>
<dbReference type="EMBL" id="U62532">
    <property type="protein sequence ID" value="AAC60307.1"/>
    <property type="molecule type" value="Genomic_DNA"/>
</dbReference>
<dbReference type="PIR" id="T11456">
    <property type="entry name" value="T11456"/>
</dbReference>
<dbReference type="SMR" id="Q95911"/>
<dbReference type="CTD" id="4512"/>
<dbReference type="UniPathway" id="UPA00705"/>
<dbReference type="GO" id="GO:0005743">
    <property type="term" value="C:mitochondrial inner membrane"/>
    <property type="evidence" value="ECO:0007669"/>
    <property type="project" value="UniProtKB-SubCell"/>
</dbReference>
<dbReference type="GO" id="GO:0045277">
    <property type="term" value="C:respiratory chain complex IV"/>
    <property type="evidence" value="ECO:0000250"/>
    <property type="project" value="UniProtKB"/>
</dbReference>
<dbReference type="GO" id="GO:0004129">
    <property type="term" value="F:cytochrome-c oxidase activity"/>
    <property type="evidence" value="ECO:0007669"/>
    <property type="project" value="UniProtKB-EC"/>
</dbReference>
<dbReference type="GO" id="GO:0020037">
    <property type="term" value="F:heme binding"/>
    <property type="evidence" value="ECO:0007669"/>
    <property type="project" value="InterPro"/>
</dbReference>
<dbReference type="GO" id="GO:0046872">
    <property type="term" value="F:metal ion binding"/>
    <property type="evidence" value="ECO:0007669"/>
    <property type="project" value="UniProtKB-KW"/>
</dbReference>
<dbReference type="GO" id="GO:0015990">
    <property type="term" value="P:electron transport coupled proton transport"/>
    <property type="evidence" value="ECO:0007669"/>
    <property type="project" value="TreeGrafter"/>
</dbReference>
<dbReference type="GO" id="GO:0006123">
    <property type="term" value="P:mitochondrial electron transport, cytochrome c to oxygen"/>
    <property type="evidence" value="ECO:0007669"/>
    <property type="project" value="TreeGrafter"/>
</dbReference>
<dbReference type="CDD" id="cd01663">
    <property type="entry name" value="Cyt_c_Oxidase_I"/>
    <property type="match status" value="1"/>
</dbReference>
<dbReference type="FunFam" id="1.20.210.10:FF:000001">
    <property type="entry name" value="Cytochrome c oxidase subunit 1"/>
    <property type="match status" value="1"/>
</dbReference>
<dbReference type="Gene3D" id="1.20.210.10">
    <property type="entry name" value="Cytochrome c oxidase-like, subunit I domain"/>
    <property type="match status" value="1"/>
</dbReference>
<dbReference type="InterPro" id="IPR023616">
    <property type="entry name" value="Cyt_c_oxase-like_su1_dom"/>
</dbReference>
<dbReference type="InterPro" id="IPR036927">
    <property type="entry name" value="Cyt_c_oxase-like_su1_sf"/>
</dbReference>
<dbReference type="InterPro" id="IPR000883">
    <property type="entry name" value="Cyt_C_Oxase_1"/>
</dbReference>
<dbReference type="InterPro" id="IPR023615">
    <property type="entry name" value="Cyt_c_Oxase_su1_BS"/>
</dbReference>
<dbReference type="InterPro" id="IPR033944">
    <property type="entry name" value="Cyt_c_oxase_su1_dom"/>
</dbReference>
<dbReference type="PANTHER" id="PTHR10422">
    <property type="entry name" value="CYTOCHROME C OXIDASE SUBUNIT 1"/>
    <property type="match status" value="1"/>
</dbReference>
<dbReference type="PANTHER" id="PTHR10422:SF18">
    <property type="entry name" value="CYTOCHROME C OXIDASE SUBUNIT 1"/>
    <property type="match status" value="1"/>
</dbReference>
<dbReference type="Pfam" id="PF00115">
    <property type="entry name" value="COX1"/>
    <property type="match status" value="1"/>
</dbReference>
<dbReference type="PRINTS" id="PR01165">
    <property type="entry name" value="CYCOXIDASEI"/>
</dbReference>
<dbReference type="SUPFAM" id="SSF81442">
    <property type="entry name" value="Cytochrome c oxidase subunit I-like"/>
    <property type="match status" value="1"/>
</dbReference>
<dbReference type="PROSITE" id="PS50855">
    <property type="entry name" value="COX1"/>
    <property type="match status" value="1"/>
</dbReference>
<dbReference type="PROSITE" id="PS00077">
    <property type="entry name" value="COX1_CUB"/>
    <property type="match status" value="1"/>
</dbReference>
<name>COX1_POLOR</name>
<accession>Q95911</accession>
<comment type="function">
    <text evidence="3">Component of the cytochrome c oxidase, the last enzyme in the mitochondrial electron transport chain which drives oxidative phosphorylation. The respiratory chain contains 3 multisubunit complexes succinate dehydrogenase (complex II, CII), ubiquinol-cytochrome c oxidoreductase (cytochrome b-c1 complex, complex III, CIII) and cytochrome c oxidase (complex IV, CIV), that cooperate to transfer electrons derived from NADH and succinate to molecular oxygen, creating an electrochemical gradient over the inner membrane that drives transmembrane transport and the ATP synthase. Cytochrome c oxidase is the component of the respiratory chain that catalyzes the reduction of oxygen to water. Electrons originating from reduced cytochrome c in the intermembrane space (IMS) are transferred via the dinuclear copper A center (CU(A)) of subunit 2 and heme A of subunit 1 to the active site in subunit 1, a binuclear center (BNC) formed by heme A3 and copper B (CU(B)). The BNC reduces molecular oxygen to 2 water molecules using 4 electrons from cytochrome c in the IMS and 4 protons from the mitochondrial matrix.</text>
</comment>
<comment type="catalytic activity">
    <reaction evidence="3">
        <text>4 Fe(II)-[cytochrome c] + O2 + 8 H(+)(in) = 4 Fe(III)-[cytochrome c] + 2 H2O + 4 H(+)(out)</text>
        <dbReference type="Rhea" id="RHEA:11436"/>
        <dbReference type="Rhea" id="RHEA-COMP:10350"/>
        <dbReference type="Rhea" id="RHEA-COMP:14399"/>
        <dbReference type="ChEBI" id="CHEBI:15377"/>
        <dbReference type="ChEBI" id="CHEBI:15378"/>
        <dbReference type="ChEBI" id="CHEBI:15379"/>
        <dbReference type="ChEBI" id="CHEBI:29033"/>
        <dbReference type="ChEBI" id="CHEBI:29034"/>
        <dbReference type="EC" id="7.1.1.9"/>
    </reaction>
    <physiologicalReaction direction="left-to-right" evidence="3">
        <dbReference type="Rhea" id="RHEA:11437"/>
    </physiologicalReaction>
</comment>
<comment type="cofactor">
    <cofactor evidence="2">
        <name>heme</name>
        <dbReference type="ChEBI" id="CHEBI:30413"/>
    </cofactor>
    <text evidence="2">Binds 2 heme A groups non-covalently per subunit.</text>
</comment>
<comment type="cofactor">
    <cofactor evidence="2">
        <name>Cu cation</name>
        <dbReference type="ChEBI" id="CHEBI:23378"/>
    </cofactor>
    <text evidence="2">Binds a copper B center.</text>
</comment>
<comment type="pathway">
    <text evidence="3">Energy metabolism; oxidative phosphorylation.</text>
</comment>
<comment type="subunit">
    <text evidence="1 2">Component of the cytochrome c oxidase (complex IV, CIV), a multisubunit enzyme composed of 14 subunits. The complex is composed of a catalytic core of 3 subunits MT-CO1, MT-CO2 and MT-CO3, encoded in the mitochondrial DNA, and 11 supernumerary subunits COX4I, COX5A, COX5B, COX6A, COX6B, COX6C, COX7A, COX7B, COX7C, COX8 and NDUFA4, which are encoded in the nuclear genome. The complex exists as a monomer or a dimer and forms supercomplexes (SCs) in the inner mitochondrial membrane with NADH-ubiquinone oxidoreductase (complex I, CI) and ubiquinol-cytochrome c oxidoreductase (cytochrome b-c1 complex, complex III, CIII), resulting in different assemblies (supercomplex SCI(1)III(2)IV(1) and megacomplex MCI(2)III(2)IV(2)) (By similarity). As a newly synthesized protein, rapidly incorporates into a multi-subunit assembly intermediate in the inner membrane, called MITRAC (mitochondrial translation regulation assembly intermediate of cytochrome c oxidase) complex, whose core components are COA3/MITRAC12 and COX14. Within the MITRAC complex, interacts with COA3 and with SMIM20/MITRAC7; the interaction with SMIM20 stabilizes the newly synthesized MT-CO1 and prevents its premature turnover. Interacts with TMEM177 in a COX20-dependent manner (By similarity).</text>
</comment>
<comment type="subcellular location">
    <subcellularLocation>
        <location evidence="2">Mitochondrion inner membrane</location>
        <topology evidence="2">Multi-pass membrane protein</topology>
    </subcellularLocation>
</comment>
<comment type="similarity">
    <text evidence="4">Belongs to the heme-copper respiratory oxidase family.</text>
</comment>
<proteinExistence type="inferred from homology"/>